<comment type="function">
    <text evidence="1">Forms part of the ribosomal stalk which helps the ribosome interact with GTP-bound translation factors. Is thus essential for accurate translation.</text>
</comment>
<comment type="subunit">
    <text evidence="1">Homodimer. Part of the ribosomal stalk of the 50S ribosomal subunit. Forms a multimeric L10(L12)X complex, where L10 forms an elongated spine to which 2 to 4 L12 dimers bind in a sequential fashion. Binds GTP-bound translation factors.</text>
</comment>
<comment type="similarity">
    <text evidence="1">Belongs to the bacterial ribosomal protein bL12 family.</text>
</comment>
<proteinExistence type="inferred from homology"/>
<reference key="1">
    <citation type="journal article" date="2009" name="PLoS Genet.">
        <title>The complete genome and proteome of Laribacter hongkongensis reveal potential mechanisms for adaptations to different temperatures and habitats.</title>
        <authorList>
            <person name="Woo P.C.Y."/>
            <person name="Lau S.K.P."/>
            <person name="Tse H."/>
            <person name="Teng J.L.L."/>
            <person name="Curreem S.O."/>
            <person name="Tsang A.K.L."/>
            <person name="Fan R.Y.Y."/>
            <person name="Wong G.K.M."/>
            <person name="Huang Y."/>
            <person name="Loman N.J."/>
            <person name="Snyder L.A.S."/>
            <person name="Cai J.J."/>
            <person name="Huang J.-D."/>
            <person name="Mak W."/>
            <person name="Pallen M.J."/>
            <person name="Lok S."/>
            <person name="Yuen K.-Y."/>
        </authorList>
    </citation>
    <scope>NUCLEOTIDE SEQUENCE [LARGE SCALE GENOMIC DNA]</scope>
    <source>
        <strain>HLHK9</strain>
    </source>
</reference>
<protein>
    <recommendedName>
        <fullName evidence="1">Large ribosomal subunit protein bL12</fullName>
    </recommendedName>
    <alternativeName>
        <fullName evidence="2">50S ribosomal protein L7/L12</fullName>
    </alternativeName>
</protein>
<name>RL7_LARHH</name>
<dbReference type="EMBL" id="CP001154">
    <property type="protein sequence ID" value="ACO73240.1"/>
    <property type="molecule type" value="Genomic_DNA"/>
</dbReference>
<dbReference type="RefSeq" id="WP_012695735.1">
    <property type="nucleotide sequence ID" value="NC_012559.1"/>
</dbReference>
<dbReference type="SMR" id="C1DAQ9"/>
<dbReference type="STRING" id="557598.LHK_00245"/>
<dbReference type="GeneID" id="75110365"/>
<dbReference type="KEGG" id="lhk:LHK_00245"/>
<dbReference type="eggNOG" id="COG0222">
    <property type="taxonomic scope" value="Bacteria"/>
</dbReference>
<dbReference type="HOGENOM" id="CLU_086499_3_2_4"/>
<dbReference type="Proteomes" id="UP000002010">
    <property type="component" value="Chromosome"/>
</dbReference>
<dbReference type="GO" id="GO:0022625">
    <property type="term" value="C:cytosolic large ribosomal subunit"/>
    <property type="evidence" value="ECO:0007669"/>
    <property type="project" value="TreeGrafter"/>
</dbReference>
<dbReference type="GO" id="GO:0003729">
    <property type="term" value="F:mRNA binding"/>
    <property type="evidence" value="ECO:0007669"/>
    <property type="project" value="TreeGrafter"/>
</dbReference>
<dbReference type="GO" id="GO:0003735">
    <property type="term" value="F:structural constituent of ribosome"/>
    <property type="evidence" value="ECO:0007669"/>
    <property type="project" value="InterPro"/>
</dbReference>
<dbReference type="GO" id="GO:0006412">
    <property type="term" value="P:translation"/>
    <property type="evidence" value="ECO:0007669"/>
    <property type="project" value="UniProtKB-UniRule"/>
</dbReference>
<dbReference type="CDD" id="cd00387">
    <property type="entry name" value="Ribosomal_L7_L12"/>
    <property type="match status" value="1"/>
</dbReference>
<dbReference type="FunFam" id="1.20.5.710:FF:000003">
    <property type="entry name" value="50S ribosomal protein L7/L12"/>
    <property type="match status" value="1"/>
</dbReference>
<dbReference type="FunFam" id="3.30.1390.10:FF:000001">
    <property type="entry name" value="50S ribosomal protein L7/L12"/>
    <property type="match status" value="1"/>
</dbReference>
<dbReference type="Gene3D" id="3.30.1390.10">
    <property type="match status" value="1"/>
</dbReference>
<dbReference type="Gene3D" id="1.20.5.710">
    <property type="entry name" value="Single helix bin"/>
    <property type="match status" value="1"/>
</dbReference>
<dbReference type="HAMAP" id="MF_00368">
    <property type="entry name" value="Ribosomal_bL12"/>
    <property type="match status" value="1"/>
</dbReference>
<dbReference type="InterPro" id="IPR000206">
    <property type="entry name" value="Ribosomal_bL12"/>
</dbReference>
<dbReference type="InterPro" id="IPR013823">
    <property type="entry name" value="Ribosomal_bL12_C"/>
</dbReference>
<dbReference type="InterPro" id="IPR014719">
    <property type="entry name" value="Ribosomal_bL12_C/ClpS-like"/>
</dbReference>
<dbReference type="InterPro" id="IPR008932">
    <property type="entry name" value="Ribosomal_bL12_oligo"/>
</dbReference>
<dbReference type="InterPro" id="IPR036235">
    <property type="entry name" value="Ribosomal_bL12_oligo_N_sf"/>
</dbReference>
<dbReference type="NCBIfam" id="TIGR00855">
    <property type="entry name" value="L12"/>
    <property type="match status" value="1"/>
</dbReference>
<dbReference type="PANTHER" id="PTHR45987">
    <property type="entry name" value="39S RIBOSOMAL PROTEIN L12"/>
    <property type="match status" value="1"/>
</dbReference>
<dbReference type="PANTHER" id="PTHR45987:SF4">
    <property type="entry name" value="LARGE RIBOSOMAL SUBUNIT PROTEIN BL12M"/>
    <property type="match status" value="1"/>
</dbReference>
<dbReference type="Pfam" id="PF00542">
    <property type="entry name" value="Ribosomal_L12"/>
    <property type="match status" value="1"/>
</dbReference>
<dbReference type="Pfam" id="PF16320">
    <property type="entry name" value="Ribosomal_L12_N"/>
    <property type="match status" value="1"/>
</dbReference>
<dbReference type="SUPFAM" id="SSF54736">
    <property type="entry name" value="ClpS-like"/>
    <property type="match status" value="1"/>
</dbReference>
<dbReference type="SUPFAM" id="SSF48300">
    <property type="entry name" value="Ribosomal protein L7/12, oligomerisation (N-terminal) domain"/>
    <property type="match status" value="1"/>
</dbReference>
<organism>
    <name type="scientific">Laribacter hongkongensis (strain HLHK9)</name>
    <dbReference type="NCBI Taxonomy" id="557598"/>
    <lineage>
        <taxon>Bacteria</taxon>
        <taxon>Pseudomonadati</taxon>
        <taxon>Pseudomonadota</taxon>
        <taxon>Betaproteobacteria</taxon>
        <taxon>Neisseriales</taxon>
        <taxon>Aquaspirillaceae</taxon>
        <taxon>Laribacter</taxon>
    </lineage>
</organism>
<sequence>MAITKDDILEAVGAMTVMELNDLVKAFEEKFGVSAAAMAVAAPAAGAAAAAEEKTEFDVVLTAAGDNKVNVIKVVRALTGLGLKEAKDMVDGAPKTVKEGVSKADAEAMLKQLTEAGAKAEIK</sequence>
<keyword id="KW-1185">Reference proteome</keyword>
<keyword id="KW-0687">Ribonucleoprotein</keyword>
<keyword id="KW-0689">Ribosomal protein</keyword>
<accession>C1DAQ9</accession>
<evidence type="ECO:0000255" key="1">
    <source>
        <dbReference type="HAMAP-Rule" id="MF_00368"/>
    </source>
</evidence>
<evidence type="ECO:0000305" key="2"/>
<gene>
    <name evidence="1" type="primary">rplL</name>
    <name type="ordered locus">LHK_00245</name>
</gene>
<feature type="chain" id="PRO_1000195800" description="Large ribosomal subunit protein bL12">
    <location>
        <begin position="1"/>
        <end position="123"/>
    </location>
</feature>